<accession>Q8KD64</accession>
<organism>
    <name type="scientific">Chlorobaculum tepidum (strain ATCC 49652 / DSM 12025 / NBRC 103806 / TLS)</name>
    <name type="common">Chlorobium tepidum</name>
    <dbReference type="NCBI Taxonomy" id="194439"/>
    <lineage>
        <taxon>Bacteria</taxon>
        <taxon>Pseudomonadati</taxon>
        <taxon>Chlorobiota</taxon>
        <taxon>Chlorobiia</taxon>
        <taxon>Chlorobiales</taxon>
        <taxon>Chlorobiaceae</taxon>
        <taxon>Chlorobaculum</taxon>
    </lineage>
</organism>
<dbReference type="EC" id="4.2.1.10" evidence="1"/>
<dbReference type="EMBL" id="AE006470">
    <property type="protein sequence ID" value="AAM72423.1"/>
    <property type="molecule type" value="Genomic_DNA"/>
</dbReference>
<dbReference type="RefSeq" id="NP_662081.1">
    <property type="nucleotide sequence ID" value="NC_002932.3"/>
</dbReference>
<dbReference type="RefSeq" id="WP_010932862.1">
    <property type="nucleotide sequence ID" value="NC_002932.3"/>
</dbReference>
<dbReference type="SMR" id="Q8KD64"/>
<dbReference type="STRING" id="194439.CT1190"/>
<dbReference type="EnsemblBacteria" id="AAM72423">
    <property type="protein sequence ID" value="AAM72423"/>
    <property type="gene ID" value="CT1190"/>
</dbReference>
<dbReference type="KEGG" id="cte:CT1190"/>
<dbReference type="PATRIC" id="fig|194439.7.peg.1085"/>
<dbReference type="eggNOG" id="COG0757">
    <property type="taxonomic scope" value="Bacteria"/>
</dbReference>
<dbReference type="HOGENOM" id="CLU_090968_2_0_10"/>
<dbReference type="OrthoDB" id="9790793at2"/>
<dbReference type="UniPathway" id="UPA00053">
    <property type="reaction ID" value="UER00086"/>
</dbReference>
<dbReference type="Proteomes" id="UP000001007">
    <property type="component" value="Chromosome"/>
</dbReference>
<dbReference type="GO" id="GO:0003855">
    <property type="term" value="F:3-dehydroquinate dehydratase activity"/>
    <property type="evidence" value="ECO:0007669"/>
    <property type="project" value="UniProtKB-UniRule"/>
</dbReference>
<dbReference type="GO" id="GO:0008652">
    <property type="term" value="P:amino acid biosynthetic process"/>
    <property type="evidence" value="ECO:0007669"/>
    <property type="project" value="UniProtKB-KW"/>
</dbReference>
<dbReference type="GO" id="GO:0009073">
    <property type="term" value="P:aromatic amino acid family biosynthetic process"/>
    <property type="evidence" value="ECO:0007669"/>
    <property type="project" value="UniProtKB-KW"/>
</dbReference>
<dbReference type="GO" id="GO:0009423">
    <property type="term" value="P:chorismate biosynthetic process"/>
    <property type="evidence" value="ECO:0007669"/>
    <property type="project" value="UniProtKB-UniRule"/>
</dbReference>
<dbReference type="GO" id="GO:0019631">
    <property type="term" value="P:quinate catabolic process"/>
    <property type="evidence" value="ECO:0007669"/>
    <property type="project" value="TreeGrafter"/>
</dbReference>
<dbReference type="CDD" id="cd00466">
    <property type="entry name" value="DHQase_II"/>
    <property type="match status" value="1"/>
</dbReference>
<dbReference type="Gene3D" id="3.40.50.9100">
    <property type="entry name" value="Dehydroquinase, class II"/>
    <property type="match status" value="1"/>
</dbReference>
<dbReference type="HAMAP" id="MF_00169">
    <property type="entry name" value="AroQ"/>
    <property type="match status" value="1"/>
</dbReference>
<dbReference type="InterPro" id="IPR001874">
    <property type="entry name" value="DHquinase_II"/>
</dbReference>
<dbReference type="InterPro" id="IPR018509">
    <property type="entry name" value="DHquinase_II_CS"/>
</dbReference>
<dbReference type="InterPro" id="IPR036441">
    <property type="entry name" value="DHquinase_II_sf"/>
</dbReference>
<dbReference type="NCBIfam" id="TIGR01088">
    <property type="entry name" value="aroQ"/>
    <property type="match status" value="1"/>
</dbReference>
<dbReference type="NCBIfam" id="NF003805">
    <property type="entry name" value="PRK05395.1-2"/>
    <property type="match status" value="1"/>
</dbReference>
<dbReference type="NCBIfam" id="NF003807">
    <property type="entry name" value="PRK05395.1-4"/>
    <property type="match status" value="1"/>
</dbReference>
<dbReference type="PANTHER" id="PTHR21272">
    <property type="entry name" value="CATABOLIC 3-DEHYDROQUINASE"/>
    <property type="match status" value="1"/>
</dbReference>
<dbReference type="PANTHER" id="PTHR21272:SF3">
    <property type="entry name" value="CATABOLIC 3-DEHYDROQUINASE"/>
    <property type="match status" value="1"/>
</dbReference>
<dbReference type="Pfam" id="PF01220">
    <property type="entry name" value="DHquinase_II"/>
    <property type="match status" value="1"/>
</dbReference>
<dbReference type="PIRSF" id="PIRSF001399">
    <property type="entry name" value="DHquinase_II"/>
    <property type="match status" value="1"/>
</dbReference>
<dbReference type="SUPFAM" id="SSF52304">
    <property type="entry name" value="Type II 3-dehydroquinate dehydratase"/>
    <property type="match status" value="1"/>
</dbReference>
<dbReference type="PROSITE" id="PS01029">
    <property type="entry name" value="DEHYDROQUINASE_II"/>
    <property type="match status" value="1"/>
</dbReference>
<evidence type="ECO:0000255" key="1">
    <source>
        <dbReference type="HAMAP-Rule" id="MF_00169"/>
    </source>
</evidence>
<name>AROQ_CHLTE</name>
<comment type="function">
    <text evidence="1">Catalyzes a trans-dehydration via an enolate intermediate.</text>
</comment>
<comment type="catalytic activity">
    <reaction evidence="1">
        <text>3-dehydroquinate = 3-dehydroshikimate + H2O</text>
        <dbReference type="Rhea" id="RHEA:21096"/>
        <dbReference type="ChEBI" id="CHEBI:15377"/>
        <dbReference type="ChEBI" id="CHEBI:16630"/>
        <dbReference type="ChEBI" id="CHEBI:32364"/>
        <dbReference type="EC" id="4.2.1.10"/>
    </reaction>
</comment>
<comment type="pathway">
    <text evidence="1">Metabolic intermediate biosynthesis; chorismate biosynthesis; chorismate from D-erythrose 4-phosphate and phosphoenolpyruvate: step 3/7.</text>
</comment>
<comment type="subunit">
    <text evidence="1">Homododecamer.</text>
</comment>
<comment type="similarity">
    <text evidence="1">Belongs to the type-II 3-dehydroquinase family.</text>
</comment>
<proteinExistence type="inferred from homology"/>
<feature type="chain" id="PRO_0000159889" description="3-dehydroquinate dehydratase">
    <location>
        <begin position="1"/>
        <end position="148"/>
    </location>
</feature>
<feature type="active site" description="Proton acceptor" evidence="1">
    <location>
        <position position="26"/>
    </location>
</feature>
<feature type="active site" description="Proton donor" evidence="1">
    <location>
        <position position="103"/>
    </location>
</feature>
<feature type="binding site" evidence="1">
    <location>
        <position position="77"/>
    </location>
    <ligand>
        <name>substrate</name>
    </ligand>
</feature>
<feature type="binding site" evidence="1">
    <location>
        <position position="83"/>
    </location>
    <ligand>
        <name>substrate</name>
    </ligand>
</feature>
<feature type="binding site" evidence="1">
    <location>
        <position position="90"/>
    </location>
    <ligand>
        <name>substrate</name>
    </ligand>
</feature>
<feature type="binding site" evidence="1">
    <location>
        <begin position="104"/>
        <end position="105"/>
    </location>
    <ligand>
        <name>substrate</name>
    </ligand>
</feature>
<feature type="binding site" evidence="1">
    <location>
        <position position="114"/>
    </location>
    <ligand>
        <name>substrate</name>
    </ligand>
</feature>
<feature type="site" description="Transition state stabilizer" evidence="1">
    <location>
        <position position="21"/>
    </location>
</feature>
<reference key="1">
    <citation type="journal article" date="2002" name="Proc. Natl. Acad. Sci. U.S.A.">
        <title>The complete genome sequence of Chlorobium tepidum TLS, a photosynthetic, anaerobic, green-sulfur bacterium.</title>
        <authorList>
            <person name="Eisen J.A."/>
            <person name="Nelson K.E."/>
            <person name="Paulsen I.T."/>
            <person name="Heidelberg J.F."/>
            <person name="Wu M."/>
            <person name="Dodson R.J."/>
            <person name="DeBoy R.T."/>
            <person name="Gwinn M.L."/>
            <person name="Nelson W.C."/>
            <person name="Haft D.H."/>
            <person name="Hickey E.K."/>
            <person name="Peterson J.D."/>
            <person name="Durkin A.S."/>
            <person name="Kolonay J.F."/>
            <person name="Yang F."/>
            <person name="Holt I.E."/>
            <person name="Umayam L.A."/>
            <person name="Mason T.M."/>
            <person name="Brenner M."/>
            <person name="Shea T.P."/>
            <person name="Parksey D.S."/>
            <person name="Nierman W.C."/>
            <person name="Feldblyum T.V."/>
            <person name="Hansen C.L."/>
            <person name="Craven M.B."/>
            <person name="Radune D."/>
            <person name="Vamathevan J.J."/>
            <person name="Khouri H.M."/>
            <person name="White O."/>
            <person name="Gruber T.M."/>
            <person name="Ketchum K.A."/>
            <person name="Venter J.C."/>
            <person name="Tettelin H."/>
            <person name="Bryant D.A."/>
            <person name="Fraser C.M."/>
        </authorList>
    </citation>
    <scope>NUCLEOTIDE SEQUENCE [LARGE SCALE GENOMIC DNA]</scope>
    <source>
        <strain>ATCC 49652 / DSM 12025 / NBRC 103806 / TLS</strain>
    </source>
</reference>
<sequence length="148" mass="16053">MMSATSLLVMNGPNLSRLGKREPEVYGSLTLDEINRGIAVAFPEVSFEFFQSEHEGALIEKLFEIEGRGGFSGVVLNAGALTHYSIALRDAISAVTMPVVEVHLSNVHKREEFRHKSVISAVCIGVIAGFGVESYHLGVRALLGRGNR</sequence>
<gene>
    <name evidence="1" type="primary">aroQ</name>
    <name type="ordered locus">CT1190</name>
</gene>
<keyword id="KW-0028">Amino-acid biosynthesis</keyword>
<keyword id="KW-0057">Aromatic amino acid biosynthesis</keyword>
<keyword id="KW-0456">Lyase</keyword>
<keyword id="KW-1185">Reference proteome</keyword>
<protein>
    <recommendedName>
        <fullName evidence="1">3-dehydroquinate dehydratase</fullName>
        <shortName evidence="1">3-dehydroquinase</shortName>
        <ecNumber evidence="1">4.2.1.10</ecNumber>
    </recommendedName>
    <alternativeName>
        <fullName evidence="1">Type II DHQase</fullName>
    </alternativeName>
</protein>